<reference key="1">
    <citation type="journal article" date="1993" name="Mol. Microbiol.">
        <title>The organization of the Bacillus subtilis 168 chromosome region between the spoVA and serA genetic loci, based on sequence data.</title>
        <authorList>
            <person name="Sorokin A.V."/>
            <person name="Zumstein E."/>
            <person name="Azevedo V."/>
            <person name="Ehrlich S.D."/>
            <person name="Serror P."/>
        </authorList>
    </citation>
    <scope>NUCLEOTIDE SEQUENCE [GENOMIC DNA]</scope>
    <source>
        <strain>168 / Marburg / ATCC 6051 / DSM 10 / JCM 1465 / NBRC 13719 / NCIMB 3610 / NRRL NRS-744 / VKM B-501</strain>
    </source>
</reference>
<reference key="2">
    <citation type="journal article" date="1997" name="Nature">
        <title>The complete genome sequence of the Gram-positive bacterium Bacillus subtilis.</title>
        <authorList>
            <person name="Kunst F."/>
            <person name="Ogasawara N."/>
            <person name="Moszer I."/>
            <person name="Albertini A.M."/>
            <person name="Alloni G."/>
            <person name="Azevedo V."/>
            <person name="Bertero M.G."/>
            <person name="Bessieres P."/>
            <person name="Bolotin A."/>
            <person name="Borchert S."/>
            <person name="Borriss R."/>
            <person name="Boursier L."/>
            <person name="Brans A."/>
            <person name="Braun M."/>
            <person name="Brignell S.C."/>
            <person name="Bron S."/>
            <person name="Brouillet S."/>
            <person name="Bruschi C.V."/>
            <person name="Caldwell B."/>
            <person name="Capuano V."/>
            <person name="Carter N.M."/>
            <person name="Choi S.-K."/>
            <person name="Codani J.-J."/>
            <person name="Connerton I.F."/>
            <person name="Cummings N.J."/>
            <person name="Daniel R.A."/>
            <person name="Denizot F."/>
            <person name="Devine K.M."/>
            <person name="Duesterhoeft A."/>
            <person name="Ehrlich S.D."/>
            <person name="Emmerson P.T."/>
            <person name="Entian K.-D."/>
            <person name="Errington J."/>
            <person name="Fabret C."/>
            <person name="Ferrari E."/>
            <person name="Foulger D."/>
            <person name="Fritz C."/>
            <person name="Fujita M."/>
            <person name="Fujita Y."/>
            <person name="Fuma S."/>
            <person name="Galizzi A."/>
            <person name="Galleron N."/>
            <person name="Ghim S.-Y."/>
            <person name="Glaser P."/>
            <person name="Goffeau A."/>
            <person name="Golightly E.J."/>
            <person name="Grandi G."/>
            <person name="Guiseppi G."/>
            <person name="Guy B.J."/>
            <person name="Haga K."/>
            <person name="Haiech J."/>
            <person name="Harwood C.R."/>
            <person name="Henaut A."/>
            <person name="Hilbert H."/>
            <person name="Holsappel S."/>
            <person name="Hosono S."/>
            <person name="Hullo M.-F."/>
            <person name="Itaya M."/>
            <person name="Jones L.-M."/>
            <person name="Joris B."/>
            <person name="Karamata D."/>
            <person name="Kasahara Y."/>
            <person name="Klaerr-Blanchard M."/>
            <person name="Klein C."/>
            <person name="Kobayashi Y."/>
            <person name="Koetter P."/>
            <person name="Koningstein G."/>
            <person name="Krogh S."/>
            <person name="Kumano M."/>
            <person name="Kurita K."/>
            <person name="Lapidus A."/>
            <person name="Lardinois S."/>
            <person name="Lauber J."/>
            <person name="Lazarevic V."/>
            <person name="Lee S.-M."/>
            <person name="Levine A."/>
            <person name="Liu H."/>
            <person name="Masuda S."/>
            <person name="Mauel C."/>
            <person name="Medigue C."/>
            <person name="Medina N."/>
            <person name="Mellado R.P."/>
            <person name="Mizuno M."/>
            <person name="Moestl D."/>
            <person name="Nakai S."/>
            <person name="Noback M."/>
            <person name="Noone D."/>
            <person name="O'Reilly M."/>
            <person name="Ogawa K."/>
            <person name="Ogiwara A."/>
            <person name="Oudega B."/>
            <person name="Park S.-H."/>
            <person name="Parro V."/>
            <person name="Pohl T.M."/>
            <person name="Portetelle D."/>
            <person name="Porwollik S."/>
            <person name="Prescott A.M."/>
            <person name="Presecan E."/>
            <person name="Pujic P."/>
            <person name="Purnelle B."/>
            <person name="Rapoport G."/>
            <person name="Rey M."/>
            <person name="Reynolds S."/>
            <person name="Rieger M."/>
            <person name="Rivolta C."/>
            <person name="Rocha E."/>
            <person name="Roche B."/>
            <person name="Rose M."/>
            <person name="Sadaie Y."/>
            <person name="Sato T."/>
            <person name="Scanlan E."/>
            <person name="Schleich S."/>
            <person name="Schroeter R."/>
            <person name="Scoffone F."/>
            <person name="Sekiguchi J."/>
            <person name="Sekowska A."/>
            <person name="Seror S.J."/>
            <person name="Serror P."/>
            <person name="Shin B.-S."/>
            <person name="Soldo B."/>
            <person name="Sorokin A."/>
            <person name="Tacconi E."/>
            <person name="Takagi T."/>
            <person name="Takahashi H."/>
            <person name="Takemaru K."/>
            <person name="Takeuchi M."/>
            <person name="Tamakoshi A."/>
            <person name="Tanaka T."/>
            <person name="Terpstra P."/>
            <person name="Tognoni A."/>
            <person name="Tosato V."/>
            <person name="Uchiyama S."/>
            <person name="Vandenbol M."/>
            <person name="Vannier F."/>
            <person name="Vassarotti A."/>
            <person name="Viari A."/>
            <person name="Wambutt R."/>
            <person name="Wedler E."/>
            <person name="Wedler H."/>
            <person name="Weitzenegger T."/>
            <person name="Winters P."/>
            <person name="Wipat A."/>
            <person name="Yamamoto H."/>
            <person name="Yamane K."/>
            <person name="Yasumoto K."/>
            <person name="Yata K."/>
            <person name="Yoshida K."/>
            <person name="Yoshikawa H.-F."/>
            <person name="Zumstein E."/>
            <person name="Yoshikawa H."/>
            <person name="Danchin A."/>
        </authorList>
    </citation>
    <scope>NUCLEOTIDE SEQUENCE [LARGE SCALE GENOMIC DNA]</scope>
    <source>
        <strain>168</strain>
    </source>
</reference>
<reference key="3">
    <citation type="journal article" date="2009" name="Microbiology">
        <title>From a consortium sequence to a unified sequence: the Bacillus subtilis 168 reference genome a decade later.</title>
        <authorList>
            <person name="Barbe V."/>
            <person name="Cruveiller S."/>
            <person name="Kunst F."/>
            <person name="Lenoble P."/>
            <person name="Meurice G."/>
            <person name="Sekowska A."/>
            <person name="Vallenet D."/>
            <person name="Wang T."/>
            <person name="Moszer I."/>
            <person name="Medigue C."/>
            <person name="Danchin A."/>
        </authorList>
    </citation>
    <scope>SEQUENCE REVISION TO 48-65</scope>
</reference>
<reference key="4">
    <citation type="journal article" date="1992" name="J. Bacteriol.">
        <title>Isolation and sequence analysis of dacB, which encodes a sporulation-specific penicillin-binding protein in Bacillus subtilis.</title>
        <authorList>
            <person name="Buchanan C.E."/>
            <person name="Ling M.-L."/>
        </authorList>
    </citation>
    <scope>NUCLEOTIDE SEQUENCE [GENOMIC DNA] OF 1-19</scope>
</reference>
<reference key="5">
    <citation type="journal article" date="1995" name="J. Bacteriol.">
        <title>The Bacillus subtilis dacB gene, encoding penicillin-binding protein 5*, is part of a three-gene operon required for proper spore cortex synthesis and spore core dehydration.</title>
        <authorList>
            <person name="Popham D.L."/>
            <person name="Illades-Auiar B."/>
            <person name="Setlow P."/>
        </authorList>
    </citation>
    <scope>CHARACTERIZATION</scope>
</reference>
<keyword id="KW-1003">Cell membrane</keyword>
<keyword id="KW-0472">Membrane</keyword>
<keyword id="KW-1185">Reference proteome</keyword>
<keyword id="KW-0749">Sporulation</keyword>
<keyword id="KW-0812">Transmembrane</keyword>
<keyword id="KW-1133">Transmembrane helix</keyword>
<feature type="chain" id="PRO_0000201931" description="Spore maturation protein B">
    <location>
        <begin position="1"/>
        <end position="178"/>
    </location>
</feature>
<feature type="transmembrane region" description="Helical" evidence="1">
    <location>
        <begin position="3"/>
        <end position="23"/>
    </location>
</feature>
<feature type="transmembrane region" description="Helical" evidence="1">
    <location>
        <begin position="42"/>
        <end position="62"/>
    </location>
</feature>
<feature type="transmembrane region" description="Helical" evidence="1">
    <location>
        <begin position="155"/>
        <end position="175"/>
    </location>
</feature>
<feature type="sequence conflict" description="In Ref. 1; AAA67492." evidence="2" ref="1">
    <original>IIPYLVGMLVAITVFRSS</original>
    <variation>HYPLFSRNACRYNCFQIHP</variation>
    <location>
        <begin position="48"/>
        <end position="65"/>
    </location>
</feature>
<name>SPMB_BACSU</name>
<accession>P35158</accession>
<proteinExistence type="evidence at protein level"/>
<organism>
    <name type="scientific">Bacillus subtilis (strain 168)</name>
    <dbReference type="NCBI Taxonomy" id="224308"/>
    <lineage>
        <taxon>Bacteria</taxon>
        <taxon>Bacillati</taxon>
        <taxon>Bacillota</taxon>
        <taxon>Bacilli</taxon>
        <taxon>Bacillales</taxon>
        <taxon>Bacillaceae</taxon>
        <taxon>Bacillus</taxon>
    </lineage>
</organism>
<sequence>MEIINWLSLAMIPIIIAGILLYGTIKKVPTYESFVEGGKEGIEIAFSIIPYLVGMLVAITVFRSSGALDFIMDLLKPAFSAIGIPAEVVPLALIRPISGTAALGMTTDLIAVYGPDSFIGRLASVMQGSTDTTLYVLTVYFGAVGIKKMGDALKVGLLADLIGVVASIIIVTLLFGSA</sequence>
<evidence type="ECO:0000255" key="1"/>
<evidence type="ECO:0000305" key="2"/>
<protein>
    <recommendedName>
        <fullName>Spore maturation protein B</fullName>
    </recommendedName>
</protein>
<dbReference type="EMBL" id="L09228">
    <property type="protein sequence ID" value="AAA67492.1"/>
    <property type="molecule type" value="Genomic_DNA"/>
</dbReference>
<dbReference type="EMBL" id="AL009126">
    <property type="protein sequence ID" value="CAB14249.2"/>
    <property type="molecule type" value="Genomic_DNA"/>
</dbReference>
<dbReference type="EMBL" id="M84227">
    <property type="status" value="NOT_ANNOTATED_CDS"/>
    <property type="molecule type" value="Genomic_DNA"/>
</dbReference>
<dbReference type="PIR" id="S45554">
    <property type="entry name" value="S45554"/>
</dbReference>
<dbReference type="RefSeq" id="NP_390198.2">
    <property type="nucleotide sequence ID" value="NC_000964.3"/>
</dbReference>
<dbReference type="RefSeq" id="WP_003230509.1">
    <property type="nucleotide sequence ID" value="NZ_OZ025638.1"/>
</dbReference>
<dbReference type="FunCoup" id="P35158">
    <property type="interactions" value="19"/>
</dbReference>
<dbReference type="STRING" id="224308.BSU23170"/>
<dbReference type="PaxDb" id="224308-BSU23170"/>
<dbReference type="EnsemblBacteria" id="CAB14249">
    <property type="protein sequence ID" value="CAB14249"/>
    <property type="gene ID" value="BSU_23170"/>
</dbReference>
<dbReference type="GeneID" id="938957"/>
<dbReference type="KEGG" id="bsu:BSU23170"/>
<dbReference type="PATRIC" id="fig|224308.179.peg.2524"/>
<dbReference type="eggNOG" id="COG0700">
    <property type="taxonomic scope" value="Bacteria"/>
</dbReference>
<dbReference type="InParanoid" id="P35158"/>
<dbReference type="OrthoDB" id="9805623at2"/>
<dbReference type="PhylomeDB" id="P35158"/>
<dbReference type="BioCyc" id="BSUB:BSU23170-MONOMER"/>
<dbReference type="Proteomes" id="UP000001570">
    <property type="component" value="Chromosome"/>
</dbReference>
<dbReference type="GO" id="GO:0005886">
    <property type="term" value="C:plasma membrane"/>
    <property type="evidence" value="ECO:0000318"/>
    <property type="project" value="GO_Central"/>
</dbReference>
<dbReference type="GO" id="GO:0030435">
    <property type="term" value="P:sporulation resulting in formation of a cellular spore"/>
    <property type="evidence" value="ECO:0007669"/>
    <property type="project" value="UniProtKB-KW"/>
</dbReference>
<dbReference type="InterPro" id="IPR011642">
    <property type="entry name" value="Gate_dom"/>
</dbReference>
<dbReference type="InterPro" id="IPR052549">
    <property type="entry name" value="SpmB"/>
</dbReference>
<dbReference type="PANTHER" id="PTHR35793">
    <property type="entry name" value="INNER MEMBRANE PROTEIN YJIG"/>
    <property type="match status" value="1"/>
</dbReference>
<dbReference type="PANTHER" id="PTHR35793:SF2">
    <property type="entry name" value="INNER MEMBRANE PROTEIN YJIG"/>
    <property type="match status" value="1"/>
</dbReference>
<dbReference type="Pfam" id="PF07670">
    <property type="entry name" value="Gate"/>
    <property type="match status" value="1"/>
</dbReference>
<comment type="function">
    <text>Involved in spore core dehydration; might be involved in the transport of something into or out of the forespore or could be required for some modification of the cortex peptidoglycan structure.</text>
</comment>
<comment type="subcellular location">
    <subcellularLocation>
        <location evidence="2">Cell membrane</location>
        <topology evidence="2">Multi-pass membrane protein</topology>
    </subcellularLocation>
</comment>
<comment type="similarity">
    <text evidence="2">Belongs to the SpmB family.</text>
</comment>
<gene>
    <name type="primary">spmB</name>
    <name type="synonym">ypuK</name>
    <name type="ordered locus">BSU23170</name>
</gene>